<name>PGK_SPHAL</name>
<feature type="chain" id="PRO_1000192848" description="Phosphoglycerate kinase">
    <location>
        <begin position="1"/>
        <end position="398"/>
    </location>
</feature>
<feature type="binding site" evidence="1">
    <location>
        <begin position="23"/>
        <end position="25"/>
    </location>
    <ligand>
        <name>substrate</name>
    </ligand>
</feature>
<feature type="binding site" evidence="1">
    <location>
        <position position="38"/>
    </location>
    <ligand>
        <name>substrate</name>
    </ligand>
</feature>
<feature type="binding site" evidence="1">
    <location>
        <begin position="61"/>
        <end position="64"/>
    </location>
    <ligand>
        <name>substrate</name>
    </ligand>
</feature>
<feature type="binding site" evidence="1">
    <location>
        <position position="120"/>
    </location>
    <ligand>
        <name>substrate</name>
    </ligand>
</feature>
<feature type="binding site" evidence="1">
    <location>
        <position position="153"/>
    </location>
    <ligand>
        <name>substrate</name>
    </ligand>
</feature>
<feature type="binding site" evidence="1">
    <location>
        <position position="203"/>
    </location>
    <ligand>
        <name>ATP</name>
        <dbReference type="ChEBI" id="CHEBI:30616"/>
    </ligand>
</feature>
<feature type="binding site" evidence="1">
    <location>
        <position position="325"/>
    </location>
    <ligand>
        <name>ATP</name>
        <dbReference type="ChEBI" id="CHEBI:30616"/>
    </ligand>
</feature>
<feature type="binding site" evidence="1">
    <location>
        <begin position="355"/>
        <end position="358"/>
    </location>
    <ligand>
        <name>ATP</name>
        <dbReference type="ChEBI" id="CHEBI:30616"/>
    </ligand>
</feature>
<reference key="1">
    <citation type="journal article" date="2009" name="Proc. Natl. Acad. Sci. U.S.A.">
        <title>The genomic basis of trophic strategy in marine bacteria.</title>
        <authorList>
            <person name="Lauro F.M."/>
            <person name="McDougald D."/>
            <person name="Thomas T."/>
            <person name="Williams T.J."/>
            <person name="Egan S."/>
            <person name="Rice S."/>
            <person name="DeMaere M.Z."/>
            <person name="Ting L."/>
            <person name="Ertan H."/>
            <person name="Johnson J."/>
            <person name="Ferriera S."/>
            <person name="Lapidus A."/>
            <person name="Anderson I."/>
            <person name="Kyrpides N."/>
            <person name="Munk A.C."/>
            <person name="Detter C."/>
            <person name="Han C.S."/>
            <person name="Brown M.V."/>
            <person name="Robb F.T."/>
            <person name="Kjelleberg S."/>
            <person name="Cavicchioli R."/>
        </authorList>
    </citation>
    <scope>NUCLEOTIDE SEQUENCE [LARGE SCALE GENOMIC DNA]</scope>
    <source>
        <strain>DSM 13593 / LMG 18877 / RB2256</strain>
    </source>
</reference>
<evidence type="ECO:0000255" key="1">
    <source>
        <dbReference type="HAMAP-Rule" id="MF_00145"/>
    </source>
</evidence>
<keyword id="KW-0067">ATP-binding</keyword>
<keyword id="KW-0963">Cytoplasm</keyword>
<keyword id="KW-0324">Glycolysis</keyword>
<keyword id="KW-0418">Kinase</keyword>
<keyword id="KW-0547">Nucleotide-binding</keyword>
<keyword id="KW-1185">Reference proteome</keyword>
<keyword id="KW-0808">Transferase</keyword>
<sequence length="398" mass="40996">MTAFKTLDDIGDVTGKRVLVRVDLNVPMIDGAVSDATRIQAAMPTIRELSDKGAIVLLLAHFGRPKGAKNPTQSLSLVMGGVEDVLGHSVMFIPEAVGEGAKAGVAVLAPGDVAVLENTRFYPGEEQNDPAFADALAEIGDLYVNDAFSAAHRAHGSTEGIARRLPAYAGRAMEAELKALDAALGNPVQPVAAVVGGAKVSSKIDVLRNLVGKVDHLIIGGGMANTFLAARGVDVGRSLCEHELVDTANAIFDAADAAGCTIHLPYDVVVAKEFAPNPPTRTVNVHEVAADEMILDVGPAAIEALADVLKNCRTLVWNGPLGAFETPPFDTATVALARTAAALTREGSLTSVAGGGDTVAALNHAGVAGDFTFVSTAGGAFLEWMEGKPLPGVDALKA</sequence>
<dbReference type="EC" id="2.7.2.3" evidence="1"/>
<dbReference type="EMBL" id="CP000356">
    <property type="protein sequence ID" value="ABF53032.1"/>
    <property type="molecule type" value="Genomic_DNA"/>
</dbReference>
<dbReference type="RefSeq" id="WP_011541614.1">
    <property type="nucleotide sequence ID" value="NC_008048.1"/>
</dbReference>
<dbReference type="SMR" id="Q1GTJ0"/>
<dbReference type="STRING" id="317655.Sala_1318"/>
<dbReference type="KEGG" id="sal:Sala_1318"/>
<dbReference type="eggNOG" id="COG0126">
    <property type="taxonomic scope" value="Bacteria"/>
</dbReference>
<dbReference type="HOGENOM" id="CLU_025427_0_2_5"/>
<dbReference type="UniPathway" id="UPA00109">
    <property type="reaction ID" value="UER00185"/>
</dbReference>
<dbReference type="Proteomes" id="UP000006578">
    <property type="component" value="Chromosome"/>
</dbReference>
<dbReference type="GO" id="GO:0005829">
    <property type="term" value="C:cytosol"/>
    <property type="evidence" value="ECO:0007669"/>
    <property type="project" value="TreeGrafter"/>
</dbReference>
<dbReference type="GO" id="GO:0043531">
    <property type="term" value="F:ADP binding"/>
    <property type="evidence" value="ECO:0007669"/>
    <property type="project" value="TreeGrafter"/>
</dbReference>
<dbReference type="GO" id="GO:0005524">
    <property type="term" value="F:ATP binding"/>
    <property type="evidence" value="ECO:0007669"/>
    <property type="project" value="UniProtKB-KW"/>
</dbReference>
<dbReference type="GO" id="GO:0004618">
    <property type="term" value="F:phosphoglycerate kinase activity"/>
    <property type="evidence" value="ECO:0007669"/>
    <property type="project" value="UniProtKB-UniRule"/>
</dbReference>
<dbReference type="GO" id="GO:0006094">
    <property type="term" value="P:gluconeogenesis"/>
    <property type="evidence" value="ECO:0007669"/>
    <property type="project" value="TreeGrafter"/>
</dbReference>
<dbReference type="GO" id="GO:0006096">
    <property type="term" value="P:glycolytic process"/>
    <property type="evidence" value="ECO:0007669"/>
    <property type="project" value="UniProtKB-UniRule"/>
</dbReference>
<dbReference type="FunFam" id="3.40.50.1260:FF:000006">
    <property type="entry name" value="Phosphoglycerate kinase"/>
    <property type="match status" value="1"/>
</dbReference>
<dbReference type="FunFam" id="3.40.50.1260:FF:000031">
    <property type="entry name" value="Phosphoglycerate kinase 1"/>
    <property type="match status" value="1"/>
</dbReference>
<dbReference type="Gene3D" id="3.40.50.1260">
    <property type="entry name" value="Phosphoglycerate kinase, N-terminal domain"/>
    <property type="match status" value="2"/>
</dbReference>
<dbReference type="HAMAP" id="MF_00145">
    <property type="entry name" value="Phosphoglyc_kinase"/>
    <property type="match status" value="1"/>
</dbReference>
<dbReference type="InterPro" id="IPR001576">
    <property type="entry name" value="Phosphoglycerate_kinase"/>
</dbReference>
<dbReference type="InterPro" id="IPR015911">
    <property type="entry name" value="Phosphoglycerate_kinase_CS"/>
</dbReference>
<dbReference type="InterPro" id="IPR015824">
    <property type="entry name" value="Phosphoglycerate_kinase_N"/>
</dbReference>
<dbReference type="InterPro" id="IPR036043">
    <property type="entry name" value="Phosphoglycerate_kinase_sf"/>
</dbReference>
<dbReference type="PANTHER" id="PTHR11406">
    <property type="entry name" value="PHOSPHOGLYCERATE KINASE"/>
    <property type="match status" value="1"/>
</dbReference>
<dbReference type="PANTHER" id="PTHR11406:SF23">
    <property type="entry name" value="PHOSPHOGLYCERATE KINASE 1, CHLOROPLASTIC-RELATED"/>
    <property type="match status" value="1"/>
</dbReference>
<dbReference type="Pfam" id="PF00162">
    <property type="entry name" value="PGK"/>
    <property type="match status" value="1"/>
</dbReference>
<dbReference type="PIRSF" id="PIRSF000724">
    <property type="entry name" value="Pgk"/>
    <property type="match status" value="1"/>
</dbReference>
<dbReference type="PRINTS" id="PR00477">
    <property type="entry name" value="PHGLYCKINASE"/>
</dbReference>
<dbReference type="SUPFAM" id="SSF53748">
    <property type="entry name" value="Phosphoglycerate kinase"/>
    <property type="match status" value="1"/>
</dbReference>
<dbReference type="PROSITE" id="PS00111">
    <property type="entry name" value="PGLYCERATE_KINASE"/>
    <property type="match status" value="1"/>
</dbReference>
<accession>Q1GTJ0</accession>
<comment type="catalytic activity">
    <reaction evidence="1">
        <text>(2R)-3-phosphoglycerate + ATP = (2R)-3-phospho-glyceroyl phosphate + ADP</text>
        <dbReference type="Rhea" id="RHEA:14801"/>
        <dbReference type="ChEBI" id="CHEBI:30616"/>
        <dbReference type="ChEBI" id="CHEBI:57604"/>
        <dbReference type="ChEBI" id="CHEBI:58272"/>
        <dbReference type="ChEBI" id="CHEBI:456216"/>
        <dbReference type="EC" id="2.7.2.3"/>
    </reaction>
</comment>
<comment type="pathway">
    <text evidence="1">Carbohydrate degradation; glycolysis; pyruvate from D-glyceraldehyde 3-phosphate: step 2/5.</text>
</comment>
<comment type="subunit">
    <text evidence="1">Monomer.</text>
</comment>
<comment type="subcellular location">
    <subcellularLocation>
        <location evidence="1">Cytoplasm</location>
    </subcellularLocation>
</comment>
<comment type="similarity">
    <text evidence="1">Belongs to the phosphoglycerate kinase family.</text>
</comment>
<gene>
    <name evidence="1" type="primary">pgk</name>
    <name type="ordered locus">Sala_1318</name>
</gene>
<organism>
    <name type="scientific">Sphingopyxis alaskensis (strain DSM 13593 / LMG 18877 / RB2256)</name>
    <name type="common">Sphingomonas alaskensis</name>
    <dbReference type="NCBI Taxonomy" id="317655"/>
    <lineage>
        <taxon>Bacteria</taxon>
        <taxon>Pseudomonadati</taxon>
        <taxon>Pseudomonadota</taxon>
        <taxon>Alphaproteobacteria</taxon>
        <taxon>Sphingomonadales</taxon>
        <taxon>Sphingomonadaceae</taxon>
        <taxon>Sphingopyxis</taxon>
    </lineage>
</organism>
<protein>
    <recommendedName>
        <fullName evidence="1">Phosphoglycerate kinase</fullName>
        <ecNumber evidence="1">2.7.2.3</ecNumber>
    </recommendedName>
</protein>
<proteinExistence type="inferred from homology"/>